<proteinExistence type="evidence at protein level"/>
<sequence length="356" mass="41089">MFPSRLLEKWWLRAFIALVIFFVWQLFYAINRVQSLEEERATLQATIEVLTRKSDGLRTQIFEKERNLVRLNGKVEEIDTQIRDHLSLLPRVNRSTPFIYFITPTHFRAAQRADLTRLSYTLSHVPNLHWIVVEDSDELTPSIAGILKRSKIPNTHLNARTPSDQKMRYDDPNWTLPRGVEQRNRALLWIQNQLSGVKEGVVYFGDDDNTYDLKIFGEMRKVKNAGVWPVGIVGGMFVETPILEKNGSISHFNAVWKPERPFPIDMAAFAVNISLVLSNANALFSFDVPRGYQESTFLENLGIHRYNMEPLAEMCTKVYVWHTRTEKPKLSKESIDRLTKKTGFNSLEAHALGVDN</sequence>
<comment type="function">
    <text evidence="3 4 5">Glycosyltransferase required for the biosynthesis of the tetrasaccharide (GlcA-Gal-Gal-Xyl-)Ser core linker of heparan sulfate and chondroitin sulfate (PubMed:11005858). May be involved in the biosynthesis of the HNK-1 carbohydrate epitope on glycoproteins (PubMed:11005858). Required for embryonic development (PubMed:9927677). Involved in the elongation of the pharyngeal isthmus during the later stages of embryonic development (PubMed:16828468). Involved in vulval epithelium invagination (PubMed:9927677).</text>
</comment>
<comment type="catalytic activity">
    <reaction evidence="3">
        <text>3-O-(beta-D-galactosyl-(1-&gt;3)-beta-D-galactosyl-(1-&gt;4)-beta-D-xylosyl)-L-seryl-[protein] + UDP-alpha-D-glucuronate = 3-O-(beta-D-GlcA-(1-&gt;3)-beta-D-Gal-(1-&gt;3)-beta-D-Gal-(1-&gt;4)-beta-D-Xyl)-L-seryl-[protein] + UDP + H(+)</text>
        <dbReference type="Rhea" id="RHEA:24168"/>
        <dbReference type="Rhea" id="RHEA-COMP:12571"/>
        <dbReference type="Rhea" id="RHEA-COMP:12573"/>
        <dbReference type="ChEBI" id="CHEBI:15378"/>
        <dbReference type="ChEBI" id="CHEBI:58052"/>
        <dbReference type="ChEBI" id="CHEBI:58223"/>
        <dbReference type="ChEBI" id="CHEBI:132090"/>
        <dbReference type="ChEBI" id="CHEBI:132093"/>
        <dbReference type="EC" id="2.4.1.135"/>
    </reaction>
</comment>
<comment type="subcellular location">
    <subcellularLocation>
        <location evidence="3">Membrane</location>
        <topology evidence="8">Single-pass type II membrane protein</topology>
    </subcellularLocation>
</comment>
<comment type="disruption phenotype">
    <text evidence="5">F1 adults accumulate eggs in the uterus. Embryos are predominantly arrested at the bean/comma embryonic stage.</text>
</comment>
<comment type="similarity">
    <text evidence="8">Belongs to the glycosyltransferase 43 family.</text>
</comment>
<evidence type="ECO:0000250" key="1"/>
<evidence type="ECO:0000255" key="2"/>
<evidence type="ECO:0000269" key="3">
    <source>
    </source>
</evidence>
<evidence type="ECO:0000269" key="4">
    <source>
    </source>
</evidence>
<evidence type="ECO:0000269" key="5">
    <source>
    </source>
</evidence>
<evidence type="ECO:0000269" key="6">
    <source>
    </source>
</evidence>
<evidence type="ECO:0000303" key="7">
    <source>
    </source>
</evidence>
<evidence type="ECO:0000305" key="8"/>
<evidence type="ECO:0000305" key="9">
    <source>
    </source>
</evidence>
<accession>Q09363</accession>
<feature type="chain" id="PRO_0000195178" description="Galactosylgalactosylxylosylprotein 3-beta-glucuronosyltransferase sqv-8">
    <location>
        <begin position="1"/>
        <end position="356"/>
    </location>
</feature>
<feature type="topological domain" description="Cytoplasmic" evidence="2">
    <location>
        <begin position="1"/>
        <end position="9"/>
    </location>
</feature>
<feature type="transmembrane region" description="Helical; Signal-anchor for type II membrane protein" evidence="2">
    <location>
        <begin position="10"/>
        <end position="30"/>
    </location>
</feature>
<feature type="topological domain" description="Lumenal" evidence="2">
    <location>
        <begin position="31"/>
        <end position="356"/>
    </location>
</feature>
<feature type="active site" description="Proton acceptor" evidence="1">
    <location>
        <position position="294"/>
    </location>
</feature>
<feature type="binding site" evidence="1">
    <location>
        <position position="208"/>
    </location>
    <ligand>
        <name>Mn(2+)</name>
        <dbReference type="ChEBI" id="CHEBI:29035"/>
    </ligand>
</feature>
<feature type="glycosylation site" description="N-linked (GlcNAc...) asparagine" evidence="2">
    <location>
        <position position="93"/>
    </location>
</feature>
<feature type="glycosylation site" description="N-linked (GlcNAc...) asparagine" evidence="2">
    <location>
        <position position="173"/>
    </location>
</feature>
<feature type="glycosylation site" description="N-linked (GlcNAc...) asparagine" evidence="2">
    <location>
        <position position="246"/>
    </location>
</feature>
<feature type="glycosylation site" description="N-linked (GlcNAc...) asparagine" evidence="2">
    <location>
        <position position="272"/>
    </location>
</feature>
<feature type="mutagenesis site" description="In n2825; embryos are arrested at the bean/comma or 2/3-fold embryonic stages. Pharyngeal isthmus is shorter and thicker." evidence="4 5">
    <original>G</original>
    <variation>D</variation>
    <location>
        <position position="200"/>
    </location>
</feature>
<feature type="mutagenesis site" description="In n2847; embryos are predominantly arrested at the bean/comma embryonic stage." evidence="5 6">
    <original>G</original>
    <variation>E</variation>
    <location>
        <position position="205"/>
    </location>
</feature>
<feature type="mutagenesis site" description="In n2843; embryos are predominantly arrested at the bean/comma embryonic stage." evidence="5 6">
    <original>G</original>
    <variation>E</variation>
    <location>
        <position position="226"/>
    </location>
</feature>
<feature type="mutagenesis site" description="In n2851; embryos are predominantly arrested at the bean/comma embryonic stage." evidence="5 6">
    <original>D</original>
    <variation>N</variation>
    <location>
        <position position="265"/>
    </location>
</feature>
<name>SQV8_CAEEL</name>
<organism>
    <name type="scientific">Caenorhabditis elegans</name>
    <dbReference type="NCBI Taxonomy" id="6239"/>
    <lineage>
        <taxon>Eukaryota</taxon>
        <taxon>Metazoa</taxon>
        <taxon>Ecdysozoa</taxon>
        <taxon>Nematoda</taxon>
        <taxon>Chromadorea</taxon>
        <taxon>Rhabditida</taxon>
        <taxon>Rhabditina</taxon>
        <taxon>Rhabditomorpha</taxon>
        <taxon>Rhabditoidea</taxon>
        <taxon>Rhabditidae</taxon>
        <taxon>Peloderinae</taxon>
        <taxon>Caenorhabditis</taxon>
    </lineage>
</organism>
<protein>
    <recommendedName>
        <fullName evidence="9">Galactosylgalactosylxylosylprotein 3-beta-glucuronosyltransferase sqv-8</fullName>
        <ecNumber evidence="3">2.4.1.135</ecNumber>
    </recommendedName>
    <alternativeName>
        <fullName evidence="7">Glucuronyl transferase I</fullName>
        <shortName evidence="7">GlcAT-I</shortName>
    </alternativeName>
    <alternativeName>
        <fullName>Squashed vulva protein 8</fullName>
    </alternativeName>
    <alternativeName>
        <fullName>Vulval invagination protein sqv-8</fullName>
    </alternativeName>
</protein>
<keyword id="KW-0325">Glycoprotein</keyword>
<keyword id="KW-0328">Glycosyltransferase</keyword>
<keyword id="KW-0464">Manganese</keyword>
<keyword id="KW-0472">Membrane</keyword>
<keyword id="KW-0479">Metal-binding</keyword>
<keyword id="KW-1185">Reference proteome</keyword>
<keyword id="KW-0735">Signal-anchor</keyword>
<keyword id="KW-0808">Transferase</keyword>
<keyword id="KW-0812">Transmembrane</keyword>
<keyword id="KW-1133">Transmembrane helix</keyword>
<reference key="1">
    <citation type="journal article" date="1999" name="Proc. Natl. Acad. Sci. U.S.A.">
        <title>Three proteins involved in Caenorhabditis elegans vulval invagination are similar to components of a glycosylation pathway.</title>
        <authorList>
            <person name="Herman T."/>
            <person name="Horvitz H.R."/>
        </authorList>
    </citation>
    <scope>NUCLEOTIDE SEQUENCE [MRNA]</scope>
    <source>
        <strain>Bristol N2</strain>
    </source>
</reference>
<reference key="2">
    <citation type="journal article" date="1998" name="Science">
        <title>Genome sequence of the nematode C. elegans: a platform for investigating biology.</title>
        <authorList>
            <consortium name="The C. elegans sequencing consortium"/>
        </authorList>
    </citation>
    <scope>NUCLEOTIDE SEQUENCE [LARGE SCALE GENOMIC DNA]</scope>
    <source>
        <strain>Bristol N2</strain>
    </source>
</reference>
<reference key="3">
    <citation type="journal article" date="1999" name="Proc. Natl. Acad. Sci. U.S.A.">
        <title>sqv mutants of Caenorhabditis elegans are defective in vulval epithelial invagination.</title>
        <authorList>
            <person name="Herman T."/>
            <person name="Hartwieg E."/>
            <person name="Horvitz H.R."/>
        </authorList>
    </citation>
    <scope>FUNCTION</scope>
    <scope>DISRUPTION PHENOTYPE</scope>
    <scope>MUTAGENESIS OF GLY-200; GLY-205; GLY-226 AND ASP-265</scope>
</reference>
<reference key="4">
    <citation type="journal article" date="2000" name="Proc. Natl. Acad. Sci. U.S.A.">
        <title>sqv-3, -7, and -8, a set of genes affecting morphogenesis in Caenorhabditis elegans, encode enzymes required for glycosaminoglycan biosynthesis.</title>
        <authorList>
            <person name="Bulik D.A."/>
            <person name="Wei G."/>
            <person name="Toyoda H."/>
            <person name="Kinoshita-Toyoda A."/>
            <person name="Waldrip W.R."/>
            <person name="Esko J.D."/>
            <person name="Robbins P.W."/>
            <person name="Selleck S.B."/>
        </authorList>
    </citation>
    <scope>FUNCTION</scope>
    <scope>CATALYTIC ACTIVITY</scope>
    <scope>SUBCELLULAR LOCATION</scope>
    <scope>DISRUPTION PHENOTYPE</scope>
</reference>
<reference key="5">
    <citation type="journal article" date="2006" name="Dev. Biol.">
        <title>C. elegans pharyngeal morphogenesis requires both de novo synthesis of pyrimidines and synthesis of heparan sulfate proteoglycans.</title>
        <authorList>
            <person name="Franks D.M."/>
            <person name="Izumikawa T."/>
            <person name="Kitagawa H."/>
            <person name="Sugahara K."/>
            <person name="Okkema P.G."/>
        </authorList>
    </citation>
    <scope>FUNCTION</scope>
    <scope>MUTAGENESIS OF GLY-200</scope>
</reference>
<dbReference type="EC" id="2.4.1.135" evidence="3"/>
<dbReference type="EMBL" id="AJ005864">
    <property type="protein sequence ID" value="CAA06741.1"/>
    <property type="molecule type" value="mRNA"/>
</dbReference>
<dbReference type="EMBL" id="Z47358">
    <property type="protein sequence ID" value="CAA87436.1"/>
    <property type="molecule type" value="Genomic_DNA"/>
</dbReference>
<dbReference type="PIR" id="T27733">
    <property type="entry name" value="T27733"/>
</dbReference>
<dbReference type="RefSeq" id="NP_496076.1">
    <property type="nucleotide sequence ID" value="NM_063675.6"/>
</dbReference>
<dbReference type="SMR" id="Q09363"/>
<dbReference type="FunCoup" id="Q09363">
    <property type="interactions" value="1677"/>
</dbReference>
<dbReference type="STRING" id="6239.ZK1307.5.1"/>
<dbReference type="CAZy" id="GT43">
    <property type="family name" value="Glycosyltransferase Family 43"/>
</dbReference>
<dbReference type="GlyCosmos" id="Q09363">
    <property type="glycosylation" value="4 sites, No reported glycans"/>
</dbReference>
<dbReference type="iPTMnet" id="Q09363"/>
<dbReference type="PaxDb" id="6239-ZK1307.5"/>
<dbReference type="PeptideAtlas" id="Q09363"/>
<dbReference type="EnsemblMetazoa" id="ZK1307.5.1">
    <property type="protein sequence ID" value="ZK1307.5.1"/>
    <property type="gene ID" value="WBGene00005026"/>
</dbReference>
<dbReference type="EnsemblMetazoa" id="ZK1307.5.2">
    <property type="protein sequence ID" value="ZK1307.5.2"/>
    <property type="gene ID" value="WBGene00005026"/>
</dbReference>
<dbReference type="GeneID" id="174517"/>
<dbReference type="KEGG" id="cel:CELE_ZK1307.5"/>
<dbReference type="UCSC" id="ZK1307.5">
    <property type="organism name" value="c. elegans"/>
</dbReference>
<dbReference type="AGR" id="WB:WBGene00005026"/>
<dbReference type="CTD" id="174517"/>
<dbReference type="WormBase" id="ZK1307.5">
    <property type="protein sequence ID" value="CE01694"/>
    <property type="gene ID" value="WBGene00005026"/>
    <property type="gene designation" value="sqv-8"/>
</dbReference>
<dbReference type="eggNOG" id="KOG1476">
    <property type="taxonomic scope" value="Eukaryota"/>
</dbReference>
<dbReference type="HOGENOM" id="CLU_045177_3_0_1"/>
<dbReference type="InParanoid" id="Q09363"/>
<dbReference type="OMA" id="HTAWEPT"/>
<dbReference type="OrthoDB" id="675023at2759"/>
<dbReference type="PhylomeDB" id="Q09363"/>
<dbReference type="Reactome" id="R-CEL-1971475">
    <property type="pathway name" value="A tetrasaccharide linker sequence is required for GAG synthesis"/>
</dbReference>
<dbReference type="PRO" id="PR:Q09363"/>
<dbReference type="Proteomes" id="UP000001940">
    <property type="component" value="Chromosome II"/>
</dbReference>
<dbReference type="Bgee" id="WBGene00005026">
    <property type="expression patterns" value="Expressed in germ line (C elegans) and 4 other cell types or tissues"/>
</dbReference>
<dbReference type="GO" id="GO:0000139">
    <property type="term" value="C:Golgi membrane"/>
    <property type="evidence" value="ECO:0000318"/>
    <property type="project" value="GO_Central"/>
</dbReference>
<dbReference type="GO" id="GO:0016020">
    <property type="term" value="C:membrane"/>
    <property type="evidence" value="ECO:0000314"/>
    <property type="project" value="WormBase"/>
</dbReference>
<dbReference type="GO" id="GO:0015018">
    <property type="term" value="F:galactosylgalactosylxylosylprotein 3-beta-glucuronosyltransferase activity"/>
    <property type="evidence" value="ECO:0000318"/>
    <property type="project" value="GO_Central"/>
</dbReference>
<dbReference type="GO" id="GO:0015020">
    <property type="term" value="F:glucuronosyltransferase activity"/>
    <property type="evidence" value="ECO:0000314"/>
    <property type="project" value="WormBase"/>
</dbReference>
<dbReference type="GO" id="GO:0046872">
    <property type="term" value="F:metal ion binding"/>
    <property type="evidence" value="ECO:0007669"/>
    <property type="project" value="UniProtKB-KW"/>
</dbReference>
<dbReference type="GO" id="GO:0005975">
    <property type="term" value="P:carbohydrate metabolic process"/>
    <property type="evidence" value="ECO:0000318"/>
    <property type="project" value="GO_Central"/>
</dbReference>
<dbReference type="GO" id="GO:0050650">
    <property type="term" value="P:chondroitin sulfate proteoglycan biosynthetic process"/>
    <property type="evidence" value="ECO:0000315"/>
    <property type="project" value="WormBase"/>
</dbReference>
<dbReference type="GO" id="GO:0018991">
    <property type="term" value="P:egg-laying behavior"/>
    <property type="evidence" value="ECO:0000315"/>
    <property type="project" value="WormBase"/>
</dbReference>
<dbReference type="GO" id="GO:0009792">
    <property type="term" value="P:embryo development ending in birth or egg hatching"/>
    <property type="evidence" value="ECO:0000315"/>
    <property type="project" value="WormBase"/>
</dbReference>
<dbReference type="GO" id="GO:0002009">
    <property type="term" value="P:morphogenesis of an epithelium"/>
    <property type="evidence" value="ECO:0000315"/>
    <property type="project" value="WormBase"/>
</dbReference>
<dbReference type="GO" id="GO:0160094">
    <property type="term" value="P:nematode pharynx development"/>
    <property type="evidence" value="ECO:0000315"/>
    <property type="project" value="WormBase"/>
</dbReference>
<dbReference type="GO" id="GO:0022414">
    <property type="term" value="P:reproductive process"/>
    <property type="evidence" value="ECO:0000315"/>
    <property type="project" value="WormBase"/>
</dbReference>
<dbReference type="GO" id="GO:0007286">
    <property type="term" value="P:spermatid development"/>
    <property type="evidence" value="ECO:0000315"/>
    <property type="project" value="WormBase"/>
</dbReference>
<dbReference type="GO" id="GO:0040025">
    <property type="term" value="P:vulval development"/>
    <property type="evidence" value="ECO:0000315"/>
    <property type="project" value="WormBase"/>
</dbReference>
<dbReference type="CDD" id="cd00218">
    <property type="entry name" value="GlcAT-I"/>
    <property type="match status" value="1"/>
</dbReference>
<dbReference type="FunFam" id="3.90.550.10:FF:000044">
    <property type="entry name" value="Galactosylgalactosylxylosylprotein 3-beta-glucuronosyltransferase"/>
    <property type="match status" value="1"/>
</dbReference>
<dbReference type="Gene3D" id="3.90.550.10">
    <property type="entry name" value="Spore Coat Polysaccharide Biosynthesis Protein SpsA, Chain A"/>
    <property type="match status" value="1"/>
</dbReference>
<dbReference type="InterPro" id="IPR005027">
    <property type="entry name" value="Glyco_trans_43"/>
</dbReference>
<dbReference type="InterPro" id="IPR029044">
    <property type="entry name" value="Nucleotide-diphossugar_trans"/>
</dbReference>
<dbReference type="PANTHER" id="PTHR10896:SF65">
    <property type="entry name" value="GALACTOSYLGALACTOSYLXYLOSYLPROTEIN 3-BETA-GLUCURONOSYLTRANSFERASE 3"/>
    <property type="match status" value="1"/>
</dbReference>
<dbReference type="PANTHER" id="PTHR10896">
    <property type="entry name" value="GALACTOSYLGALACTOSYLXYLOSYLPROTEIN 3-BETA-GLUCURONOSYLTRANSFERASE BETA-1,3-GLUCURONYLTRANSFERASE"/>
    <property type="match status" value="1"/>
</dbReference>
<dbReference type="Pfam" id="PF03360">
    <property type="entry name" value="Glyco_transf_43"/>
    <property type="match status" value="1"/>
</dbReference>
<dbReference type="SUPFAM" id="SSF53448">
    <property type="entry name" value="Nucleotide-diphospho-sugar transferases"/>
    <property type="match status" value="1"/>
</dbReference>
<gene>
    <name type="primary">sqv-8</name>
    <name type="ORF">ZK1307.5</name>
</gene>